<protein>
    <recommendedName>
        <fullName evidence="1">Small ribosomal subunit protein bS16</fullName>
    </recommendedName>
    <alternativeName>
        <fullName evidence="2">30S ribosomal protein S16</fullName>
    </alternativeName>
</protein>
<name>RS16_RUTMC</name>
<dbReference type="EMBL" id="CP000488">
    <property type="protein sequence ID" value="ABL02696.1"/>
    <property type="molecule type" value="Genomic_DNA"/>
</dbReference>
<dbReference type="RefSeq" id="WP_011738321.1">
    <property type="nucleotide sequence ID" value="NC_008610.1"/>
</dbReference>
<dbReference type="SMR" id="A1AXN9"/>
<dbReference type="STRING" id="413404.Rmag_0990"/>
<dbReference type="KEGG" id="rma:Rmag_0990"/>
<dbReference type="eggNOG" id="COG0228">
    <property type="taxonomic scope" value="Bacteria"/>
</dbReference>
<dbReference type="HOGENOM" id="CLU_100590_5_1_6"/>
<dbReference type="OrthoDB" id="9807878at2"/>
<dbReference type="Proteomes" id="UP000002587">
    <property type="component" value="Chromosome"/>
</dbReference>
<dbReference type="GO" id="GO:0005737">
    <property type="term" value="C:cytoplasm"/>
    <property type="evidence" value="ECO:0007669"/>
    <property type="project" value="UniProtKB-ARBA"/>
</dbReference>
<dbReference type="GO" id="GO:0015935">
    <property type="term" value="C:small ribosomal subunit"/>
    <property type="evidence" value="ECO:0007669"/>
    <property type="project" value="TreeGrafter"/>
</dbReference>
<dbReference type="GO" id="GO:0003735">
    <property type="term" value="F:structural constituent of ribosome"/>
    <property type="evidence" value="ECO:0007669"/>
    <property type="project" value="InterPro"/>
</dbReference>
<dbReference type="GO" id="GO:0006412">
    <property type="term" value="P:translation"/>
    <property type="evidence" value="ECO:0007669"/>
    <property type="project" value="UniProtKB-UniRule"/>
</dbReference>
<dbReference type="Gene3D" id="3.30.1320.10">
    <property type="match status" value="1"/>
</dbReference>
<dbReference type="HAMAP" id="MF_00385">
    <property type="entry name" value="Ribosomal_bS16"/>
    <property type="match status" value="1"/>
</dbReference>
<dbReference type="InterPro" id="IPR000307">
    <property type="entry name" value="Ribosomal_bS16"/>
</dbReference>
<dbReference type="InterPro" id="IPR020592">
    <property type="entry name" value="Ribosomal_bS16_CS"/>
</dbReference>
<dbReference type="InterPro" id="IPR023803">
    <property type="entry name" value="Ribosomal_bS16_dom_sf"/>
</dbReference>
<dbReference type="NCBIfam" id="TIGR00002">
    <property type="entry name" value="S16"/>
    <property type="match status" value="1"/>
</dbReference>
<dbReference type="PANTHER" id="PTHR12919">
    <property type="entry name" value="30S RIBOSOMAL PROTEIN S16"/>
    <property type="match status" value="1"/>
</dbReference>
<dbReference type="PANTHER" id="PTHR12919:SF20">
    <property type="entry name" value="SMALL RIBOSOMAL SUBUNIT PROTEIN BS16M"/>
    <property type="match status" value="1"/>
</dbReference>
<dbReference type="Pfam" id="PF00886">
    <property type="entry name" value="Ribosomal_S16"/>
    <property type="match status" value="1"/>
</dbReference>
<dbReference type="SUPFAM" id="SSF54565">
    <property type="entry name" value="Ribosomal protein S16"/>
    <property type="match status" value="1"/>
</dbReference>
<dbReference type="PROSITE" id="PS00732">
    <property type="entry name" value="RIBOSOMAL_S16"/>
    <property type="match status" value="1"/>
</dbReference>
<keyword id="KW-0687">Ribonucleoprotein</keyword>
<keyword id="KW-0689">Ribosomal protein</keyword>
<sequence length="91" mass="10641">MVKIRLARGGAKKKPFYLIVATDSRKRRDSGYYIERLGYFNPVAHGQEVRLTIEKDRFAYWTSKGAQISDRVKQLVKEFKDPSIYEKRVAT</sequence>
<comment type="similarity">
    <text evidence="1">Belongs to the bacterial ribosomal protein bS16 family.</text>
</comment>
<reference key="1">
    <citation type="journal article" date="2007" name="Science">
        <title>The Calyptogena magnifica chemoautotrophic symbiont genome.</title>
        <authorList>
            <person name="Newton I.L.G."/>
            <person name="Woyke T."/>
            <person name="Auchtung T.A."/>
            <person name="Dilly G.F."/>
            <person name="Dutton R.J."/>
            <person name="Fisher M.C."/>
            <person name="Fontanez K.M."/>
            <person name="Lau E."/>
            <person name="Stewart F.J."/>
            <person name="Richardson P.M."/>
            <person name="Barry K.W."/>
            <person name="Saunders E."/>
            <person name="Detter J.C."/>
            <person name="Wu D."/>
            <person name="Eisen J.A."/>
            <person name="Cavanaugh C.M."/>
        </authorList>
    </citation>
    <scope>NUCLEOTIDE SEQUENCE [LARGE SCALE GENOMIC DNA]</scope>
</reference>
<feature type="chain" id="PRO_1000049340" description="Small ribosomal subunit protein bS16">
    <location>
        <begin position="1"/>
        <end position="91"/>
    </location>
</feature>
<organism>
    <name type="scientific">Ruthia magnifica subsp. Calyptogena magnifica</name>
    <dbReference type="NCBI Taxonomy" id="413404"/>
    <lineage>
        <taxon>Bacteria</taxon>
        <taxon>Pseudomonadati</taxon>
        <taxon>Pseudomonadota</taxon>
        <taxon>Gammaproteobacteria</taxon>
        <taxon>Candidatus Pseudothioglobaceae</taxon>
        <taxon>Candidatus Ruthturnera</taxon>
    </lineage>
</organism>
<evidence type="ECO:0000255" key="1">
    <source>
        <dbReference type="HAMAP-Rule" id="MF_00385"/>
    </source>
</evidence>
<evidence type="ECO:0000305" key="2"/>
<proteinExistence type="inferred from homology"/>
<accession>A1AXN9</accession>
<gene>
    <name evidence="1" type="primary">rpsP</name>
    <name type="ordered locus">Rmag_0990</name>
</gene>